<keyword id="KW-0119">Carbohydrate metabolism</keyword>
<keyword id="KW-0378">Hydrolase</keyword>
<keyword id="KW-0624">Polysaccharide degradation</keyword>
<keyword id="KW-1185">Reference proteome</keyword>
<keyword id="KW-0964">Secreted</keyword>
<keyword id="KW-0719">Serine esterase</keyword>
<keyword id="KW-0732">Signal</keyword>
<keyword id="KW-0858">Xylan degradation</keyword>
<sequence>MVPTIIYSAILALSAFTPSVFAQTRSSGCGKQPSLANGVHNINGREYILKVPDNYDKNKAHHLVFGLHWRGGNMWNIVDGQSIQPWYGLETRAQGSAIFVAPNGKNAGWANYGGEDIAFIDAIIKQVESDLCVDQSSRFATGFSWGGGMSYSLACSRAKQFKAVSVLSGGVISGCDGGNDPIAYLGIHGINDGVLPFQGGVNLAQKFVRNNGCQQSNVGTPQPGSRGSVRTDFKGCSKPVSFIAYDGGHDAAPLGVGSSLAPDATWRFFMAA</sequence>
<comment type="function">
    <text evidence="1">Involved in degradation of plant cell walls. Hydrolyzes the feruloyl-arabinose ester bond in arabinoxylans, and the feruloyl-galactose ester bond in pectin. Active against paranitrophenyl-acetate, methyl ferulate and wheat arabinoxylan (By similarity).</text>
</comment>
<comment type="catalytic activity">
    <reaction>
        <text>feruloyl-polysaccharide + H2O = ferulate + polysaccharide.</text>
        <dbReference type="EC" id="3.1.1.73"/>
    </reaction>
</comment>
<comment type="subcellular location">
    <subcellularLocation>
        <location evidence="1">Secreted</location>
    </subcellularLocation>
</comment>
<comment type="similarity">
    <text evidence="3">Belongs to the faeC family.</text>
</comment>
<accession>A4D9B6</accession>
<dbReference type="EC" id="3.1.1.73"/>
<dbReference type="EMBL" id="AAHF01000001">
    <property type="protein sequence ID" value="EBA27502.1"/>
    <property type="molecule type" value="Genomic_DNA"/>
</dbReference>
<dbReference type="RefSeq" id="XP_001481678.1">
    <property type="nucleotide sequence ID" value="XM_001481628.1"/>
</dbReference>
<dbReference type="SMR" id="A4D9B6"/>
<dbReference type="STRING" id="330879.A4D9B6"/>
<dbReference type="ESTHER" id="aspfu-faec">
    <property type="family name" value="FaeC"/>
</dbReference>
<dbReference type="EnsemblFungi" id="EBA27502">
    <property type="protein sequence ID" value="EBA27502"/>
    <property type="gene ID" value="AFUA_2G14530"/>
</dbReference>
<dbReference type="GeneID" id="5076993"/>
<dbReference type="KEGG" id="afm:AFUA_2G14530"/>
<dbReference type="VEuPathDB" id="FungiDB:Afu2g14530"/>
<dbReference type="eggNOG" id="ENOG502SMEI">
    <property type="taxonomic scope" value="Eukaryota"/>
</dbReference>
<dbReference type="HOGENOM" id="CLU_027551_2_0_1"/>
<dbReference type="InParanoid" id="A4D9B6"/>
<dbReference type="OMA" id="IHGINDG"/>
<dbReference type="OrthoDB" id="424610at2759"/>
<dbReference type="Proteomes" id="UP000002530">
    <property type="component" value="Chromosome 2"/>
</dbReference>
<dbReference type="GO" id="GO:0005576">
    <property type="term" value="C:extracellular region"/>
    <property type="evidence" value="ECO:0007669"/>
    <property type="project" value="UniProtKB-SubCell"/>
</dbReference>
<dbReference type="GO" id="GO:0030600">
    <property type="term" value="F:feruloyl esterase activity"/>
    <property type="evidence" value="ECO:0007669"/>
    <property type="project" value="UniProtKB-EC"/>
</dbReference>
<dbReference type="GO" id="GO:0045493">
    <property type="term" value="P:xylan catabolic process"/>
    <property type="evidence" value="ECO:0007669"/>
    <property type="project" value="UniProtKB-KW"/>
</dbReference>
<dbReference type="Gene3D" id="3.40.50.1820">
    <property type="entry name" value="alpha/beta hydrolase"/>
    <property type="match status" value="1"/>
</dbReference>
<dbReference type="InterPro" id="IPR029058">
    <property type="entry name" value="AB_hydrolase_fold"/>
</dbReference>
<dbReference type="InterPro" id="IPR043595">
    <property type="entry name" value="FaeB/C/D"/>
</dbReference>
<dbReference type="PANTHER" id="PTHR38050">
    <property type="match status" value="1"/>
</dbReference>
<dbReference type="PANTHER" id="PTHR38050:SF1">
    <property type="entry name" value="FERULOYL ESTERASE C"/>
    <property type="match status" value="1"/>
</dbReference>
<dbReference type="SUPFAM" id="SSF53474">
    <property type="entry name" value="alpha/beta-Hydrolases"/>
    <property type="match status" value="1"/>
</dbReference>
<evidence type="ECO:0000250" key="1"/>
<evidence type="ECO:0000255" key="2"/>
<evidence type="ECO:0000305" key="3"/>
<proteinExistence type="inferred from homology"/>
<protein>
    <recommendedName>
        <fullName>Probable feruloyl esterase C</fullName>
        <ecNumber>3.1.1.73</ecNumber>
    </recommendedName>
    <alternativeName>
        <fullName>Ferulic acid esterase C</fullName>
    </alternativeName>
</protein>
<feature type="signal peptide" evidence="2">
    <location>
        <begin position="1"/>
        <end position="22"/>
    </location>
</feature>
<feature type="chain" id="PRO_0000394939" description="Probable feruloyl esterase C">
    <location>
        <begin position="23"/>
        <end position="272"/>
    </location>
</feature>
<reference key="1">
    <citation type="journal article" date="2005" name="Nature">
        <title>Genomic sequence of the pathogenic and allergenic filamentous fungus Aspergillus fumigatus.</title>
        <authorList>
            <person name="Nierman W.C."/>
            <person name="Pain A."/>
            <person name="Anderson M.J."/>
            <person name="Wortman J.R."/>
            <person name="Kim H.S."/>
            <person name="Arroyo J."/>
            <person name="Berriman M."/>
            <person name="Abe K."/>
            <person name="Archer D.B."/>
            <person name="Bermejo C."/>
            <person name="Bennett J.W."/>
            <person name="Bowyer P."/>
            <person name="Chen D."/>
            <person name="Collins M."/>
            <person name="Coulsen R."/>
            <person name="Davies R."/>
            <person name="Dyer P.S."/>
            <person name="Farman M.L."/>
            <person name="Fedorova N."/>
            <person name="Fedorova N.D."/>
            <person name="Feldblyum T.V."/>
            <person name="Fischer R."/>
            <person name="Fosker N."/>
            <person name="Fraser A."/>
            <person name="Garcia J.L."/>
            <person name="Garcia M.J."/>
            <person name="Goble A."/>
            <person name="Goldman G.H."/>
            <person name="Gomi K."/>
            <person name="Griffith-Jones S."/>
            <person name="Gwilliam R."/>
            <person name="Haas B.J."/>
            <person name="Haas H."/>
            <person name="Harris D.E."/>
            <person name="Horiuchi H."/>
            <person name="Huang J."/>
            <person name="Humphray S."/>
            <person name="Jimenez J."/>
            <person name="Keller N."/>
            <person name="Khouri H."/>
            <person name="Kitamoto K."/>
            <person name="Kobayashi T."/>
            <person name="Konzack S."/>
            <person name="Kulkarni R."/>
            <person name="Kumagai T."/>
            <person name="Lafton A."/>
            <person name="Latge J.-P."/>
            <person name="Li W."/>
            <person name="Lord A."/>
            <person name="Lu C."/>
            <person name="Majoros W.H."/>
            <person name="May G.S."/>
            <person name="Miller B.L."/>
            <person name="Mohamoud Y."/>
            <person name="Molina M."/>
            <person name="Monod M."/>
            <person name="Mouyna I."/>
            <person name="Mulligan S."/>
            <person name="Murphy L.D."/>
            <person name="O'Neil S."/>
            <person name="Paulsen I."/>
            <person name="Penalva M.A."/>
            <person name="Pertea M."/>
            <person name="Price C."/>
            <person name="Pritchard B.L."/>
            <person name="Quail M.A."/>
            <person name="Rabbinowitsch E."/>
            <person name="Rawlins N."/>
            <person name="Rajandream M.A."/>
            <person name="Reichard U."/>
            <person name="Renauld H."/>
            <person name="Robson G.D."/>
            <person name="Rodriguez de Cordoba S."/>
            <person name="Rodriguez-Pena J.M."/>
            <person name="Ronning C.M."/>
            <person name="Rutter S."/>
            <person name="Salzberg S.L."/>
            <person name="Sanchez M."/>
            <person name="Sanchez-Ferrero J.C."/>
            <person name="Saunders D."/>
            <person name="Seeger K."/>
            <person name="Squares R."/>
            <person name="Squares S."/>
            <person name="Takeuchi M."/>
            <person name="Tekaia F."/>
            <person name="Turner G."/>
            <person name="Vazquez de Aldana C.R."/>
            <person name="Weidman J."/>
            <person name="White O."/>
            <person name="Woodward J.R."/>
            <person name="Yu J.-H."/>
            <person name="Fraser C.M."/>
            <person name="Galagan J.E."/>
            <person name="Asai K."/>
            <person name="Machida M."/>
            <person name="Hall N."/>
            <person name="Barrell B.G."/>
            <person name="Denning D.W."/>
        </authorList>
    </citation>
    <scope>NUCLEOTIDE SEQUENCE [LARGE SCALE GENOMIC DNA]</scope>
    <source>
        <strain>ATCC MYA-4609 / CBS 101355 / FGSC A1100 / Af293</strain>
    </source>
</reference>
<organism>
    <name type="scientific">Aspergillus fumigatus (strain ATCC MYA-4609 / CBS 101355 / FGSC A1100 / Af293)</name>
    <name type="common">Neosartorya fumigata</name>
    <dbReference type="NCBI Taxonomy" id="330879"/>
    <lineage>
        <taxon>Eukaryota</taxon>
        <taxon>Fungi</taxon>
        <taxon>Dikarya</taxon>
        <taxon>Ascomycota</taxon>
        <taxon>Pezizomycotina</taxon>
        <taxon>Eurotiomycetes</taxon>
        <taxon>Eurotiomycetidae</taxon>
        <taxon>Eurotiales</taxon>
        <taxon>Aspergillaceae</taxon>
        <taxon>Aspergillus</taxon>
        <taxon>Aspergillus subgen. Fumigati</taxon>
    </lineage>
</organism>
<name>FAEC_ASPFU</name>
<gene>
    <name type="primary">faeC</name>
    <name type="ORF">AFUA_2G14530</name>
</gene>